<protein>
    <recommendedName>
        <fullName>Pyruvate dehydrogenase E1 component subunit alpha</fullName>
        <ecNumber>1.2.4.1</ecNumber>
    </recommendedName>
</protein>
<reference key="1">
    <citation type="journal article" date="2003" name="Mol. Microbiol.">
        <title>Genome-based analysis of virulence genes in a non-biofilm-forming Staphylococcus epidermidis strain (ATCC 12228).</title>
        <authorList>
            <person name="Zhang Y.-Q."/>
            <person name="Ren S.-X."/>
            <person name="Li H.-L."/>
            <person name="Wang Y.-X."/>
            <person name="Fu G."/>
            <person name="Yang J."/>
            <person name="Qin Z.-Q."/>
            <person name="Miao Y.-G."/>
            <person name="Wang W.-Y."/>
            <person name="Chen R.-S."/>
            <person name="Shen Y."/>
            <person name="Chen Z."/>
            <person name="Yuan Z.-H."/>
            <person name="Zhao G.-P."/>
            <person name="Qu D."/>
            <person name="Danchin A."/>
            <person name="Wen Y.-M."/>
        </authorList>
    </citation>
    <scope>NUCLEOTIDE SEQUENCE [LARGE SCALE GENOMIC DNA]</scope>
    <source>
        <strain>ATCC 12228 / FDA PCI 1200</strain>
    </source>
</reference>
<feature type="chain" id="PRO_0000162211" description="Pyruvate dehydrogenase E1 component subunit alpha">
    <location>
        <begin position="1"/>
        <end position="370"/>
    </location>
</feature>
<sequence>MAPKLQAQFDAVKVLNETQSKFEMVQILDEDGNVVNEDLVPDLTDEQLVELMERMVWTRILDQRSISLNRQGRLGFYAPTAGQEASQLASQYALESEDFILPGYRDVPQIIWHGLPLTDAFLFSRGHFKGNQFPEGVNALSPQIIIGAQYIQTAGVAFGLKKRGKNAVAITYTGDGGSSQGDFYEGINFASAYKAPAIFVIQNNNYAISTPRSKQTAAETLAQKAISVGIPGIQVDGMDALAVYQATLEARERAVAGEGPTVIETLTYRYGPHTMAGDDPTRYRTSDEDAEWEKKDPLVRFRKYLEAKGLWNEDKENEVVERAKSEIKAAIKEADNTEKQTVTSLMDIMYEEMPQNLAEQYEIYKEKESK</sequence>
<accession>Q8CPN3</accession>
<gene>
    <name type="primary">pdhA</name>
    <name type="ordered locus">SE_0791</name>
</gene>
<proteinExistence type="inferred from homology"/>
<comment type="function">
    <text evidence="1">The pyruvate dehydrogenase complex catalyzes the overall conversion of pyruvate to acetyl-CoA and CO(2). It contains multiple copies of three enzymatic components: pyruvate dehydrogenase (E1), dihydrolipoamide acetyltransferase (E2) and lipoamide dehydrogenase (E3) (By similarity).</text>
</comment>
<comment type="catalytic activity">
    <reaction>
        <text>N(6)-[(R)-lipoyl]-L-lysyl-[protein] + pyruvate + H(+) = N(6)-[(R)-S(8)-acetyldihydrolipoyl]-L-lysyl-[protein] + CO2</text>
        <dbReference type="Rhea" id="RHEA:19189"/>
        <dbReference type="Rhea" id="RHEA-COMP:10474"/>
        <dbReference type="Rhea" id="RHEA-COMP:10478"/>
        <dbReference type="ChEBI" id="CHEBI:15361"/>
        <dbReference type="ChEBI" id="CHEBI:15378"/>
        <dbReference type="ChEBI" id="CHEBI:16526"/>
        <dbReference type="ChEBI" id="CHEBI:83099"/>
        <dbReference type="ChEBI" id="CHEBI:83111"/>
        <dbReference type="EC" id="1.2.4.1"/>
    </reaction>
</comment>
<comment type="cofactor">
    <cofactor evidence="1">
        <name>thiamine diphosphate</name>
        <dbReference type="ChEBI" id="CHEBI:58937"/>
    </cofactor>
</comment>
<comment type="subunit">
    <text>Heterodimer of an alpha and a beta chain.</text>
</comment>
<evidence type="ECO:0000250" key="1"/>
<keyword id="KW-0560">Oxidoreductase</keyword>
<keyword id="KW-0670">Pyruvate</keyword>
<keyword id="KW-0786">Thiamine pyrophosphate</keyword>
<organism>
    <name type="scientific">Staphylococcus epidermidis (strain ATCC 12228 / FDA PCI 1200)</name>
    <dbReference type="NCBI Taxonomy" id="176280"/>
    <lineage>
        <taxon>Bacteria</taxon>
        <taxon>Bacillati</taxon>
        <taxon>Bacillota</taxon>
        <taxon>Bacilli</taxon>
        <taxon>Bacillales</taxon>
        <taxon>Staphylococcaceae</taxon>
        <taxon>Staphylococcus</taxon>
    </lineage>
</organism>
<name>ODPA_STAES</name>
<dbReference type="EC" id="1.2.4.1"/>
<dbReference type="EMBL" id="AE015929">
    <property type="protein sequence ID" value="AAO04388.1"/>
    <property type="molecule type" value="Genomic_DNA"/>
</dbReference>
<dbReference type="RefSeq" id="NP_764346.1">
    <property type="nucleotide sequence ID" value="NC_004461.1"/>
</dbReference>
<dbReference type="RefSeq" id="WP_001831653.1">
    <property type="nucleotide sequence ID" value="NZ_WBME01000031.1"/>
</dbReference>
<dbReference type="SMR" id="Q8CPN3"/>
<dbReference type="GeneID" id="50019070"/>
<dbReference type="KEGG" id="sep:SE_0791"/>
<dbReference type="PATRIC" id="fig|176280.10.peg.764"/>
<dbReference type="eggNOG" id="COG1071">
    <property type="taxonomic scope" value="Bacteria"/>
</dbReference>
<dbReference type="HOGENOM" id="CLU_029393_1_0_9"/>
<dbReference type="OrthoDB" id="9766715at2"/>
<dbReference type="Proteomes" id="UP000001411">
    <property type="component" value="Chromosome"/>
</dbReference>
<dbReference type="GO" id="GO:0004739">
    <property type="term" value="F:pyruvate dehydrogenase (acetyl-transferring) activity"/>
    <property type="evidence" value="ECO:0007669"/>
    <property type="project" value="UniProtKB-EC"/>
</dbReference>
<dbReference type="GO" id="GO:0009083">
    <property type="term" value="P:branched-chain amino acid catabolic process"/>
    <property type="evidence" value="ECO:0007669"/>
    <property type="project" value="TreeGrafter"/>
</dbReference>
<dbReference type="CDD" id="cd02000">
    <property type="entry name" value="TPP_E1_PDC_ADC_BCADC"/>
    <property type="match status" value="1"/>
</dbReference>
<dbReference type="FunFam" id="3.40.50.970:FF:000023">
    <property type="entry name" value="Pyruvate dehydrogenase E1 component subunit alpha"/>
    <property type="match status" value="1"/>
</dbReference>
<dbReference type="Gene3D" id="3.40.50.970">
    <property type="match status" value="1"/>
</dbReference>
<dbReference type="InterPro" id="IPR050771">
    <property type="entry name" value="Alpha-ketoacid_DH_E1_comp"/>
</dbReference>
<dbReference type="InterPro" id="IPR001017">
    <property type="entry name" value="DH_E1"/>
</dbReference>
<dbReference type="InterPro" id="IPR017596">
    <property type="entry name" value="PdhA/BkdA"/>
</dbReference>
<dbReference type="InterPro" id="IPR029061">
    <property type="entry name" value="THDP-binding"/>
</dbReference>
<dbReference type="NCBIfam" id="TIGR03181">
    <property type="entry name" value="PDH_E1_alph_x"/>
    <property type="match status" value="1"/>
</dbReference>
<dbReference type="PANTHER" id="PTHR43380">
    <property type="entry name" value="2-OXOISOVALERATE DEHYDROGENASE SUBUNIT ALPHA, MITOCHONDRIAL"/>
    <property type="match status" value="1"/>
</dbReference>
<dbReference type="PANTHER" id="PTHR43380:SF1">
    <property type="entry name" value="2-OXOISOVALERATE DEHYDROGENASE SUBUNIT ALPHA, MITOCHONDRIAL"/>
    <property type="match status" value="1"/>
</dbReference>
<dbReference type="Pfam" id="PF00676">
    <property type="entry name" value="E1_dh"/>
    <property type="match status" value="1"/>
</dbReference>
<dbReference type="SUPFAM" id="SSF52518">
    <property type="entry name" value="Thiamin diphosphate-binding fold (THDP-binding)"/>
    <property type="match status" value="1"/>
</dbReference>